<comment type="function">
    <text evidence="1 2 6">Oxidoreductase; part of the gene cluster that mediates the biosynthesis of swainsonine (SW), a cytotoxic fungal alkaloid and a potential cancer therapy drug (PubMed:28381497, PubMed:32786262). Swainsonine production occurs via a multibranched pathway and is dispensable for fungal colonization of plants and infection of insect hosts (PubMed:32786262). The first step of swainsonine biosynthesis is the production of the precursor pipecolic acid (PA) via conversion of L-lysine (Lys) to 1-piperideine-6-carboxylate (P6C) by the aminotransferase swnA, the latter being further reduced to PA by the reductase swnR (PubMed:32786262). PA can be converted from lysine by both the SW biosynthetic cluster and the unclustered genes such as lysine cyclodeaminase (PubMed:32786262). The PKS-NRPS hybrid synthetase swnK uptakes and condensates PA and malonyl-CoA with and without skipping of the ketoreductase (KR) domain in order to produce 3 intermediates, 1-oxoindolizidine, (1S)-1-hydroxyindolizin, and (1R)-1-hydroxyindolizine; with the transisomer (1S)-1-hydroxyindolizin being predominant (PubMed:32786262). The terminal thioester reductase (TE) domain of swnK is involved in reduction of the thioester bond to release the intermediate aldehydes (PubMed:32786262). The oxidoreductase swnN could contribute to the reduction of 1-oxoindolizidine to (1S)-1-hydroxyindolizin and (1R)-1-hydroxyindolizine, contributing to the major route of SW production (Probable). The dioxygenase swnH2 would be responsible for the oxidization of (1R)-1-hydroxyindolizine into (1R,2S)-1,2-dihydroxyindolizine and of (1S)-1-hydroxyindolizin to yield both (1R,2S)-1,2-dihydroxyindolizine and (1S,2S)-1,2-dihydroxyindolizine (PubMed:32786262). The dioxygenase swnH1 then performs the conversion of the 1,2-dihydroxyindolizine epimers to SW (PubMed:32786262).</text>
</comment>
<comment type="pathway">
    <text evidence="6">Mycotoxin biosynthesis.</text>
</comment>
<comment type="disruption phenotype">
    <text evidence="2">Leads to higher level of PA accumulation.</text>
</comment>
<comment type="similarity">
    <text evidence="4">Belongs to the NmrA-type oxidoreductase family. Isoflavone reductase subfamily.</text>
</comment>
<keyword id="KW-0521">NADP</keyword>
<keyword id="KW-0560">Oxidoreductase</keyword>
<reference key="1">
    <citation type="journal article" date="2011" name="PLoS Genet.">
        <title>Genome sequencing and comparative transcriptomics of the model entomopathogenic fungi Metarhizium anisopliae and M. acridum.</title>
        <authorList>
            <person name="Gao Q."/>
            <person name="Jin K."/>
            <person name="Ying S.-H."/>
            <person name="Zhang Y."/>
            <person name="Xiao G."/>
            <person name="Shang Y."/>
            <person name="Duan Z."/>
            <person name="Hu X."/>
            <person name="Xie X.-Q."/>
            <person name="Zhou G."/>
            <person name="Peng G."/>
            <person name="Luo Z."/>
            <person name="Huang W."/>
            <person name="Wang B."/>
            <person name="Fang W."/>
            <person name="Wang S."/>
            <person name="Zhong Y."/>
            <person name="Ma L.-J."/>
            <person name="St Leger R.J."/>
            <person name="Zhao G.-P."/>
            <person name="Pei Y."/>
            <person name="Feng M.-G."/>
            <person name="Xia Y."/>
            <person name="Wang C."/>
        </authorList>
    </citation>
    <scope>NUCLEOTIDE SEQUENCE [LARGE SCALE GENOMIC DNA]</scope>
    <source>
        <strain>ARSEF 23 / ATCC MYA-3075</strain>
    </source>
</reference>
<reference key="2">
    <citation type="journal article" date="2014" name="Proc. Natl. Acad. Sci. U.S.A.">
        <title>Trajectory and genomic determinants of fungal-pathogen speciation and host adaptation.</title>
        <authorList>
            <person name="Hu X."/>
            <person name="Xiao G."/>
            <person name="Zheng P."/>
            <person name="Shang Y."/>
            <person name="Su Y."/>
            <person name="Zhang X."/>
            <person name="Liu X."/>
            <person name="Zhan S."/>
            <person name="St Leger R.J."/>
            <person name="Wang C."/>
        </authorList>
    </citation>
    <scope>GENOME REANNOTATION</scope>
    <source>
        <strain>ARSEF 23 / ATCC MYA-3075</strain>
    </source>
</reference>
<reference key="3">
    <citation type="journal article" date="2017" name="G3 (Bethesda)">
        <title>Swainsonine biosynthesis genes in diverse symbiotic and pathogenic fungi.</title>
        <authorList>
            <person name="Cook D."/>
            <person name="Donzelli B.G."/>
            <person name="Creamer R."/>
            <person name="Baucom D.L."/>
            <person name="Gardner D.R."/>
            <person name="Pan J."/>
            <person name="Moore N."/>
            <person name="Jaromczyk J.W."/>
            <person name="Schardl C.L."/>
        </authorList>
    </citation>
    <scope>FUNCTION</scope>
    <scope>PATHWAY</scope>
</reference>
<reference key="4">
    <citation type="journal article" date="2020" name="ACS Chem. Biol.">
        <title>Unveiling of Swainsonine Biosynthesis via a Multibranched Pathway in Fungi.</title>
        <authorList>
            <person name="Luo F."/>
            <person name="Hong S."/>
            <person name="Chen B."/>
            <person name="Yin Y."/>
            <person name="Tang G."/>
            <person name="Hu F."/>
            <person name="Zhang H."/>
            <person name="Wang C."/>
        </authorList>
    </citation>
    <scope>FUNCTION</scope>
    <scope>DISRUPTION PHENOTYPE</scope>
    <scope>PATHWAY</scope>
</reference>
<protein>
    <recommendedName>
        <fullName evidence="3">Oxidoreductase swnN</fullName>
        <ecNumber evidence="5">1.3.1.-</ecNumber>
    </recommendedName>
    <alternativeName>
        <fullName evidence="3">Swainsonine biosynthesis gene cluster protein N</fullName>
    </alternativeName>
</protein>
<gene>
    <name evidence="3" type="primary">swnN</name>
    <name type="ORF">MAA_08620</name>
</gene>
<dbReference type="EC" id="1.3.1.-" evidence="5"/>
<dbReference type="EMBL" id="ADNJ02000001">
    <property type="protein sequence ID" value="EFY95967.1"/>
    <property type="molecule type" value="Genomic_DNA"/>
</dbReference>
<dbReference type="RefSeq" id="XP_007824809.1">
    <property type="nucleotide sequence ID" value="XM_007826618.1"/>
</dbReference>
<dbReference type="SMR" id="E9F8M1"/>
<dbReference type="GeneID" id="19262906"/>
<dbReference type="KEGG" id="maj:MAA_08620"/>
<dbReference type="HOGENOM" id="CLU_044876_0_0_1"/>
<dbReference type="OrthoDB" id="419598at2759"/>
<dbReference type="Proteomes" id="UP000002498">
    <property type="component" value="Unassembled WGS sequence"/>
</dbReference>
<dbReference type="GO" id="GO:0016491">
    <property type="term" value="F:oxidoreductase activity"/>
    <property type="evidence" value="ECO:0007669"/>
    <property type="project" value="UniProtKB-KW"/>
</dbReference>
<dbReference type="Gene3D" id="3.40.50.720">
    <property type="entry name" value="NAD(P)-binding Rossmann-like Domain"/>
    <property type="match status" value="1"/>
</dbReference>
<dbReference type="Gene3D" id="3.90.25.10">
    <property type="entry name" value="UDP-galactose 4-epimerase, domain 1"/>
    <property type="match status" value="1"/>
</dbReference>
<dbReference type="InterPro" id="IPR016040">
    <property type="entry name" value="NAD(P)-bd_dom"/>
</dbReference>
<dbReference type="InterPro" id="IPR036291">
    <property type="entry name" value="NAD(P)-bd_dom_sf"/>
</dbReference>
<dbReference type="InterPro" id="IPR051609">
    <property type="entry name" value="NmrA/Isoflavone_reductase-like"/>
</dbReference>
<dbReference type="PANTHER" id="PTHR47706:SF4">
    <property type="entry name" value="NMRA-LIKE DOMAIN-CONTAINING PROTEIN"/>
    <property type="match status" value="1"/>
</dbReference>
<dbReference type="PANTHER" id="PTHR47706">
    <property type="entry name" value="NMRA-LIKE FAMILY PROTEIN"/>
    <property type="match status" value="1"/>
</dbReference>
<dbReference type="Pfam" id="PF13460">
    <property type="entry name" value="NAD_binding_10"/>
    <property type="match status" value="1"/>
</dbReference>
<dbReference type="SUPFAM" id="SSF51735">
    <property type="entry name" value="NAD(P)-binding Rossmann-fold domains"/>
    <property type="match status" value="1"/>
</dbReference>
<name>SWNN_METRA</name>
<sequence length="341" mass="37835">MVVVAVAGGTGGVGRTVLDAIAKSGQHQAIVLSRTTSVPTAVDEPKRFAVDYNSVEQMKKILQENNVQVVVSALLLVDEAVAQSQINLIRAAAQSGTVTKFIPSEYYIDFHAPIPYVSLQSILSRQRFSLFSTSGADLFTNFQLEAEAELSRHAQLTWTLIRVGIFLDHLTMPHNPKTTYITPFWVFVDIDHEQCVFPGDGSQPLVLTHSQDLAAYIERLVGLPAENWPRESVVASNKLLVKDLESLVNKVTGKKFKVAYDSVECIHKGRITQLPSNTAVFQDPAKGEMFRDVEHQVMLSMLSRAHDLPGKNLAELFPEVETTDIEDFFRSGWTLKQSRAP</sequence>
<evidence type="ECO:0000269" key="1">
    <source>
    </source>
</evidence>
<evidence type="ECO:0000269" key="2">
    <source>
    </source>
</evidence>
<evidence type="ECO:0000303" key="3">
    <source>
    </source>
</evidence>
<evidence type="ECO:0000305" key="4"/>
<evidence type="ECO:0000305" key="5">
    <source>
    </source>
</evidence>
<evidence type="ECO:0000305" key="6">
    <source>
    </source>
</evidence>
<accession>E9F8M1</accession>
<proteinExistence type="inferred from homology"/>
<organism>
    <name type="scientific">Metarhizium robertsii (strain ARSEF 23 / ATCC MYA-3075)</name>
    <name type="common">Metarhizium anisopliae (strain ARSEF 23)</name>
    <dbReference type="NCBI Taxonomy" id="655844"/>
    <lineage>
        <taxon>Eukaryota</taxon>
        <taxon>Fungi</taxon>
        <taxon>Dikarya</taxon>
        <taxon>Ascomycota</taxon>
        <taxon>Pezizomycotina</taxon>
        <taxon>Sordariomycetes</taxon>
        <taxon>Hypocreomycetidae</taxon>
        <taxon>Hypocreales</taxon>
        <taxon>Clavicipitaceae</taxon>
        <taxon>Metarhizium</taxon>
    </lineage>
</organism>
<feature type="chain" id="PRO_0000441188" description="Oxidoreductase swnN">
    <location>
        <begin position="1"/>
        <end position="341"/>
    </location>
</feature>